<keyword id="KW-0997">Cell inner membrane</keyword>
<keyword id="KW-1003">Cell membrane</keyword>
<keyword id="KW-0472">Membrane</keyword>
<keyword id="KW-1185">Reference proteome</keyword>
<keyword id="KW-0769">Symport</keyword>
<keyword id="KW-0812">Transmembrane</keyword>
<keyword id="KW-1133">Transmembrane helix</keyword>
<keyword id="KW-0813">Transport</keyword>
<name>DCTA_RHILW</name>
<proteinExistence type="inferred from homology"/>
<organism>
    <name type="scientific">Rhizobium leguminosarum bv. trifolii (strain WSM2304)</name>
    <dbReference type="NCBI Taxonomy" id="395492"/>
    <lineage>
        <taxon>Bacteria</taxon>
        <taxon>Pseudomonadati</taxon>
        <taxon>Pseudomonadota</taxon>
        <taxon>Alphaproteobacteria</taxon>
        <taxon>Hyphomicrobiales</taxon>
        <taxon>Rhizobiaceae</taxon>
        <taxon>Rhizobium/Agrobacterium group</taxon>
        <taxon>Rhizobium</taxon>
    </lineage>
</organism>
<dbReference type="EMBL" id="CP001191">
    <property type="protein sequence ID" value="ACI55988.1"/>
    <property type="molecule type" value="Genomic_DNA"/>
</dbReference>
<dbReference type="RefSeq" id="WP_012558461.1">
    <property type="nucleotide sequence ID" value="NC_011369.1"/>
</dbReference>
<dbReference type="SMR" id="B5ZXG4"/>
<dbReference type="STRING" id="395492.Rleg2_2717"/>
<dbReference type="KEGG" id="rlt:Rleg2_2717"/>
<dbReference type="eggNOG" id="COG1301">
    <property type="taxonomic scope" value="Bacteria"/>
</dbReference>
<dbReference type="HOGENOM" id="CLU_019375_7_0_5"/>
<dbReference type="Proteomes" id="UP000008330">
    <property type="component" value="Chromosome"/>
</dbReference>
<dbReference type="GO" id="GO:0005886">
    <property type="term" value="C:plasma membrane"/>
    <property type="evidence" value="ECO:0007669"/>
    <property type="project" value="UniProtKB-SubCell"/>
</dbReference>
<dbReference type="GO" id="GO:0015138">
    <property type="term" value="F:fumarate transmembrane transporter activity"/>
    <property type="evidence" value="ECO:0007669"/>
    <property type="project" value="TreeGrafter"/>
</dbReference>
<dbReference type="GO" id="GO:0015366">
    <property type="term" value="F:malate:proton symporter activity"/>
    <property type="evidence" value="ECO:0007669"/>
    <property type="project" value="TreeGrafter"/>
</dbReference>
<dbReference type="GO" id="GO:0015141">
    <property type="term" value="F:succinate transmembrane transporter activity"/>
    <property type="evidence" value="ECO:0007669"/>
    <property type="project" value="TreeGrafter"/>
</dbReference>
<dbReference type="GO" id="GO:0070778">
    <property type="term" value="P:L-aspartate transmembrane transport"/>
    <property type="evidence" value="ECO:0007669"/>
    <property type="project" value="TreeGrafter"/>
</dbReference>
<dbReference type="FunFam" id="1.10.3860.10:FF:000001">
    <property type="entry name" value="C4-dicarboxylate transport protein"/>
    <property type="match status" value="1"/>
</dbReference>
<dbReference type="Gene3D" id="1.10.3860.10">
    <property type="entry name" value="Sodium:dicarboxylate symporter"/>
    <property type="match status" value="1"/>
</dbReference>
<dbReference type="HAMAP" id="MF_01300">
    <property type="entry name" value="C4_dicarb_transport"/>
    <property type="match status" value="1"/>
</dbReference>
<dbReference type="InterPro" id="IPR023954">
    <property type="entry name" value="C4_dicarb_transport"/>
</dbReference>
<dbReference type="InterPro" id="IPR001991">
    <property type="entry name" value="Na-dicarboxylate_symporter"/>
</dbReference>
<dbReference type="InterPro" id="IPR018107">
    <property type="entry name" value="Na-dicarboxylate_symporter_CS"/>
</dbReference>
<dbReference type="InterPro" id="IPR036458">
    <property type="entry name" value="Na:dicarbo_symporter_sf"/>
</dbReference>
<dbReference type="NCBIfam" id="NF002461">
    <property type="entry name" value="PRK01663.1"/>
    <property type="match status" value="1"/>
</dbReference>
<dbReference type="NCBIfam" id="NF009587">
    <property type="entry name" value="PRK13027.1"/>
    <property type="match status" value="1"/>
</dbReference>
<dbReference type="PANTHER" id="PTHR42865:SF1">
    <property type="entry name" value="AEROBIC C4-DICARBOXYLATE TRANSPORT PROTEIN"/>
    <property type="match status" value="1"/>
</dbReference>
<dbReference type="PANTHER" id="PTHR42865">
    <property type="entry name" value="PROTON/GLUTAMATE-ASPARTATE SYMPORTER"/>
    <property type="match status" value="1"/>
</dbReference>
<dbReference type="Pfam" id="PF00375">
    <property type="entry name" value="SDF"/>
    <property type="match status" value="1"/>
</dbReference>
<dbReference type="PRINTS" id="PR00173">
    <property type="entry name" value="EDTRNSPORT"/>
</dbReference>
<dbReference type="SUPFAM" id="SSF118215">
    <property type="entry name" value="Proton glutamate symport protein"/>
    <property type="match status" value="1"/>
</dbReference>
<dbReference type="PROSITE" id="PS00713">
    <property type="entry name" value="NA_DICARBOXYL_SYMP_1"/>
    <property type="match status" value="1"/>
</dbReference>
<dbReference type="PROSITE" id="PS00714">
    <property type="entry name" value="NA_DICARBOXYL_SYMP_2"/>
    <property type="match status" value="1"/>
</dbReference>
<protein>
    <recommendedName>
        <fullName evidence="1">C4-dicarboxylate transport protein</fullName>
    </recommendedName>
</protein>
<reference key="1">
    <citation type="journal article" date="2010" name="Stand. Genomic Sci.">
        <title>Complete genome sequence of Rhizobium leguminosarum bv trifolii strain WSM2304, an effective microsymbiont of the South American clover Trifolium polymorphum.</title>
        <authorList>
            <person name="Reeve W."/>
            <person name="O'Hara G."/>
            <person name="Chain P."/>
            <person name="Ardley J."/>
            <person name="Brau L."/>
            <person name="Nandesena K."/>
            <person name="Tiwari R."/>
            <person name="Malfatti S."/>
            <person name="Kiss H."/>
            <person name="Lapidus A."/>
            <person name="Copeland A."/>
            <person name="Nolan M."/>
            <person name="Land M."/>
            <person name="Ivanova N."/>
            <person name="Mavromatis K."/>
            <person name="Markowitz V."/>
            <person name="Kyrpides N."/>
            <person name="Melino V."/>
            <person name="Denton M."/>
            <person name="Yates R."/>
            <person name="Howieson J."/>
        </authorList>
    </citation>
    <scope>NUCLEOTIDE SEQUENCE [LARGE SCALE GENOMIC DNA]</scope>
    <source>
        <strain>WSM2304</strain>
    </source>
</reference>
<evidence type="ECO:0000255" key="1">
    <source>
        <dbReference type="HAMAP-Rule" id="MF_01300"/>
    </source>
</evidence>
<feature type="chain" id="PRO_1000140462" description="C4-dicarboxylate transport protein">
    <location>
        <begin position="1"/>
        <end position="443"/>
    </location>
</feature>
<feature type="transmembrane region" description="Helical" evidence="1">
    <location>
        <begin position="17"/>
        <end position="37"/>
    </location>
</feature>
<feature type="transmembrane region" description="Helical" evidence="1">
    <location>
        <begin position="57"/>
        <end position="77"/>
    </location>
</feature>
<feature type="transmembrane region" description="Helical" evidence="1">
    <location>
        <begin position="92"/>
        <end position="112"/>
    </location>
</feature>
<feature type="transmembrane region" description="Helical" evidence="1">
    <location>
        <begin position="139"/>
        <end position="159"/>
    </location>
</feature>
<feature type="transmembrane region" description="Helical" evidence="1">
    <location>
        <begin position="161"/>
        <end position="181"/>
    </location>
</feature>
<feature type="transmembrane region" description="Helical" evidence="1">
    <location>
        <begin position="201"/>
        <end position="221"/>
    </location>
</feature>
<feature type="transmembrane region" description="Helical" evidence="1">
    <location>
        <begin position="234"/>
        <end position="254"/>
    </location>
</feature>
<feature type="transmembrane region" description="Helical" evidence="1">
    <location>
        <begin position="320"/>
        <end position="340"/>
    </location>
</feature>
<feature type="transmembrane region" description="Helical" evidence="1">
    <location>
        <begin position="368"/>
        <end position="388"/>
    </location>
</feature>
<sequence length="443" mass="46025">MIAAPFDAVADSTGKKPFYSHLYVQVLAAIAAGILLGHFYPELGAQLKPLGDAFIKLVKMIIAPVIFLTVATGIAGMSDLKKVGRVAGKAMLYFLTFSTLALVIGMVVANVVQPGAGMNIDPASLDPTAVATYASKAHEQSIVGFLTNIIPTTIVGAFADGDILQVLFFSVLFGIALAMVGEKGEQVVNFLNALTAPVFKLVAILMKAAPIGAFGAMAFTIGKYGIGSIANLAMLIGTFYLTSLLFVLVVLGAVARYNGFSILALLRYIKEELLLVLGTSSSEAALPGLMNKMEKAGCKRSVVGLVIPTGYSFNLDGTNIYMTLAALFIAQATGINLSWGDQILLLLVAMLSSKGAAGITGAGFITLAATLSVVPSVPVAGMALILGIDRFMSECRALTNLVGNAVATIVVARWENELDTAQLARALGGQAEESAPAGLQPAE</sequence>
<accession>B5ZXG4</accession>
<comment type="function">
    <text evidence="1">Responsible for the transport of dicarboxylates such as succinate, fumarate, and malate from the periplasm across the membrane.</text>
</comment>
<comment type="subcellular location">
    <subcellularLocation>
        <location evidence="1">Cell inner membrane</location>
        <topology evidence="1">Multi-pass membrane protein</topology>
    </subcellularLocation>
</comment>
<comment type="similarity">
    <text evidence="1">Belongs to the dicarboxylate/amino acid:cation symporter (DAACS) (TC 2.A.23) family.</text>
</comment>
<gene>
    <name evidence="1" type="primary">dctA</name>
    <name type="ordered locus">Rleg2_2717</name>
</gene>